<feature type="chain" id="PRO_0000373602" description="Penton protein H240R">
    <location>
        <begin position="1"/>
        <end position="240"/>
    </location>
</feature>
<keyword id="KW-0426">Late protein</keyword>
<keyword id="KW-0946">Virion</keyword>
<organism>
    <name type="scientific">African swine fever virus (isolate Tick/South Africa/Pretoriuskop Pr4/1996)</name>
    <name type="common">ASFV</name>
    <dbReference type="NCBI Taxonomy" id="561443"/>
    <lineage>
        <taxon>Viruses</taxon>
        <taxon>Varidnaviria</taxon>
        <taxon>Bamfordvirae</taxon>
        <taxon>Nucleocytoviricota</taxon>
        <taxon>Pokkesviricetes</taxon>
        <taxon>Asfuvirales</taxon>
        <taxon>Asfarviridae</taxon>
        <taxon>Asfivirus</taxon>
        <taxon>African swine fever virus</taxon>
    </lineage>
</organism>
<gene>
    <name type="ordered locus">Pret-132</name>
</gene>
<proteinExistence type="inferred from homology"/>
<evidence type="ECO:0000250" key="1">
    <source>
        <dbReference type="UniProtKB" id="Q65190"/>
    </source>
</evidence>
<evidence type="ECO:0000305" key="2"/>
<organismHost>
    <name type="scientific">Ornithodoros</name>
    <name type="common">relapsing fever ticks</name>
    <dbReference type="NCBI Taxonomy" id="6937"/>
</organismHost>
<organismHost>
    <name type="scientific">Phacochoerus aethiopicus</name>
    <name type="common">Warthog</name>
    <dbReference type="NCBI Taxonomy" id="85517"/>
</organismHost>
<organismHost>
    <name type="scientific">Phacochoerus africanus</name>
    <name type="common">Warthog</name>
    <dbReference type="NCBI Taxonomy" id="41426"/>
</organismHost>
<organismHost>
    <name type="scientific">Potamochoerus larvatus</name>
    <name type="common">Bushpig</name>
    <dbReference type="NCBI Taxonomy" id="273792"/>
</organismHost>
<organismHost>
    <name type="scientific">Sus scrofa</name>
    <name type="common">Pig</name>
    <dbReference type="NCBI Taxonomy" id="9823"/>
</organismHost>
<dbReference type="EMBL" id="AY261363">
    <property type="status" value="NOT_ANNOTATED_CDS"/>
    <property type="molecule type" value="Genomic_DNA"/>
</dbReference>
<dbReference type="SMR" id="P0CAA8"/>
<dbReference type="Proteomes" id="UP000000859">
    <property type="component" value="Segment"/>
</dbReference>
<dbReference type="GO" id="GO:0044423">
    <property type="term" value="C:virion component"/>
    <property type="evidence" value="ECO:0007669"/>
    <property type="project" value="UniProtKB-KW"/>
</dbReference>
<accession>P0CAA8</accession>
<reference key="1">
    <citation type="submission" date="2003-03" db="EMBL/GenBank/DDBJ databases">
        <title>African swine fever virus genomes.</title>
        <authorList>
            <person name="Kutish G.F."/>
            <person name="Rock D.L."/>
        </authorList>
    </citation>
    <scope>NUCLEOTIDE SEQUENCE [GENOMIC DNA]</scope>
</reference>
<protein>
    <recommendedName>
        <fullName evidence="1">Penton protein H240R</fullName>
        <shortName>pH240R</shortName>
    </recommendedName>
</protein>
<comment type="function">
    <text evidence="1">Forms the penton at the fivefold vertices of the icosahedral capsid (By similarity). Together with the minor capsid proteins (p17, p49, and M1249L), forms a complicated network immediately below the outer capsid shell, stabilizing the whole capsid (By similarity).</text>
</comment>
<comment type="subcellular location">
    <subcellularLocation>
        <location evidence="1">Virion</location>
    </subcellularLocation>
</comment>
<comment type="induction">
    <text evidence="2">Expressed in the late phase of the viral replicative cycle.</text>
</comment>
<comment type="similarity">
    <text evidence="2">Belongs to the asfivirus H240R family.</text>
</comment>
<name>CAPSP_ASFP4</name>
<sequence>MAANIIATRATPKMASKKEHQYCLLDSQEKRDGHYPFSFELKPYGQTGANIIGVQGSLTHVIKMTVFPFMIPFPLQKIHIDDFIGGRVYLFFKELDVQAISDVNGMQYHFEFKVVPVSSNQVELLPVNNKYKFTYAIPEVQYLTPIFYDLSGPLNFPLDTLSVHVDSLTKHIQLPIQNHNLTTGDRVFISGYKHLQTIELCKNNKIFIKCIPPLSSEKIKLYIPKNRIRIPLYFKSLKNV</sequence>